<reference key="1">
    <citation type="book" date="2006" name="Gram positive pathogens, 2nd edition">
        <title>The Staphylococcus aureus NCTC 8325 genome.</title>
        <editorList>
            <person name="Fischetti V."/>
            <person name="Novick R."/>
            <person name="Ferretti J."/>
            <person name="Portnoy D."/>
            <person name="Rood J."/>
        </editorList>
        <authorList>
            <person name="Gillaspy A.F."/>
            <person name="Worrell V."/>
            <person name="Orvis J."/>
            <person name="Roe B.A."/>
            <person name="Dyer D.W."/>
            <person name="Iandolo J.J."/>
        </authorList>
    </citation>
    <scope>NUCLEOTIDE SEQUENCE [LARGE SCALE GENOMIC DNA]</scope>
    <source>
        <strain>NCTC 8325 / PS 47</strain>
    </source>
</reference>
<gene>
    <name evidence="1" type="primary">alaS</name>
    <name type="ordered locus">SAOUHSC_01722</name>
</gene>
<dbReference type="EC" id="6.1.1.7" evidence="1"/>
<dbReference type="EMBL" id="CP000253">
    <property type="protein sequence ID" value="ABD30795.1"/>
    <property type="molecule type" value="Genomic_DNA"/>
</dbReference>
<dbReference type="RefSeq" id="WP_000734064.1">
    <property type="nucleotide sequence ID" value="NZ_LS483365.1"/>
</dbReference>
<dbReference type="RefSeq" id="YP_500231.1">
    <property type="nucleotide sequence ID" value="NC_007795.1"/>
</dbReference>
<dbReference type="SMR" id="Q2FXV9"/>
<dbReference type="STRING" id="93061.SAOUHSC_01722"/>
<dbReference type="PaxDb" id="1280-SAXN108_1646"/>
<dbReference type="GeneID" id="3921072"/>
<dbReference type="KEGG" id="sao:SAOUHSC_01722"/>
<dbReference type="PATRIC" id="fig|93061.5.peg.1570"/>
<dbReference type="eggNOG" id="COG0013">
    <property type="taxonomic scope" value="Bacteria"/>
</dbReference>
<dbReference type="HOGENOM" id="CLU_004485_1_1_9"/>
<dbReference type="OrthoDB" id="9803884at2"/>
<dbReference type="PRO" id="PR:Q2FXV9"/>
<dbReference type="Proteomes" id="UP000008816">
    <property type="component" value="Chromosome"/>
</dbReference>
<dbReference type="GO" id="GO:0005829">
    <property type="term" value="C:cytosol"/>
    <property type="evidence" value="ECO:0000318"/>
    <property type="project" value="GO_Central"/>
</dbReference>
<dbReference type="GO" id="GO:0004813">
    <property type="term" value="F:alanine-tRNA ligase activity"/>
    <property type="evidence" value="ECO:0000318"/>
    <property type="project" value="GO_Central"/>
</dbReference>
<dbReference type="GO" id="GO:0002161">
    <property type="term" value="F:aminoacyl-tRNA deacylase activity"/>
    <property type="evidence" value="ECO:0000318"/>
    <property type="project" value="GO_Central"/>
</dbReference>
<dbReference type="GO" id="GO:0005524">
    <property type="term" value="F:ATP binding"/>
    <property type="evidence" value="ECO:0007669"/>
    <property type="project" value="UniProtKB-UniRule"/>
</dbReference>
<dbReference type="GO" id="GO:0140096">
    <property type="term" value="F:catalytic activity, acting on a protein"/>
    <property type="evidence" value="ECO:0007669"/>
    <property type="project" value="UniProtKB-ARBA"/>
</dbReference>
<dbReference type="GO" id="GO:0016740">
    <property type="term" value="F:transferase activity"/>
    <property type="evidence" value="ECO:0007669"/>
    <property type="project" value="UniProtKB-ARBA"/>
</dbReference>
<dbReference type="GO" id="GO:0000049">
    <property type="term" value="F:tRNA binding"/>
    <property type="evidence" value="ECO:0007669"/>
    <property type="project" value="UniProtKB-KW"/>
</dbReference>
<dbReference type="GO" id="GO:0008270">
    <property type="term" value="F:zinc ion binding"/>
    <property type="evidence" value="ECO:0007669"/>
    <property type="project" value="UniProtKB-UniRule"/>
</dbReference>
<dbReference type="GO" id="GO:0006419">
    <property type="term" value="P:alanyl-tRNA aminoacylation"/>
    <property type="evidence" value="ECO:0000318"/>
    <property type="project" value="GO_Central"/>
</dbReference>
<dbReference type="CDD" id="cd00673">
    <property type="entry name" value="AlaRS_core"/>
    <property type="match status" value="1"/>
</dbReference>
<dbReference type="FunFam" id="2.40.30.130:FF:000001">
    <property type="entry name" value="Alanine--tRNA ligase"/>
    <property type="match status" value="1"/>
</dbReference>
<dbReference type="FunFam" id="3.10.310.40:FF:000001">
    <property type="entry name" value="Alanine--tRNA ligase"/>
    <property type="match status" value="1"/>
</dbReference>
<dbReference type="FunFam" id="3.30.54.20:FF:000001">
    <property type="entry name" value="Alanine--tRNA ligase"/>
    <property type="match status" value="1"/>
</dbReference>
<dbReference type="FunFam" id="3.30.930.10:FF:000046">
    <property type="entry name" value="Alanine--tRNA ligase"/>
    <property type="match status" value="1"/>
</dbReference>
<dbReference type="FunFam" id="3.30.980.10:FF:000004">
    <property type="entry name" value="Alanine--tRNA ligase, cytoplasmic"/>
    <property type="match status" value="1"/>
</dbReference>
<dbReference type="Gene3D" id="2.40.30.130">
    <property type="match status" value="1"/>
</dbReference>
<dbReference type="Gene3D" id="3.10.310.40">
    <property type="match status" value="1"/>
</dbReference>
<dbReference type="Gene3D" id="3.30.54.20">
    <property type="match status" value="1"/>
</dbReference>
<dbReference type="Gene3D" id="3.30.930.10">
    <property type="entry name" value="Bira Bifunctional Protein, Domain 2"/>
    <property type="match status" value="1"/>
</dbReference>
<dbReference type="Gene3D" id="3.30.980.10">
    <property type="entry name" value="Threonyl-trna Synthetase, Chain A, domain 2"/>
    <property type="match status" value="1"/>
</dbReference>
<dbReference type="HAMAP" id="MF_00036_B">
    <property type="entry name" value="Ala_tRNA_synth_B"/>
    <property type="match status" value="1"/>
</dbReference>
<dbReference type="InterPro" id="IPR045864">
    <property type="entry name" value="aa-tRNA-synth_II/BPL/LPL"/>
</dbReference>
<dbReference type="InterPro" id="IPR002318">
    <property type="entry name" value="Ala-tRNA-lgiase_IIc"/>
</dbReference>
<dbReference type="InterPro" id="IPR018162">
    <property type="entry name" value="Ala-tRNA-ligase_IIc_anticod-bd"/>
</dbReference>
<dbReference type="InterPro" id="IPR018165">
    <property type="entry name" value="Ala-tRNA-synth_IIc_core"/>
</dbReference>
<dbReference type="InterPro" id="IPR018164">
    <property type="entry name" value="Ala-tRNA-synth_IIc_N"/>
</dbReference>
<dbReference type="InterPro" id="IPR050058">
    <property type="entry name" value="Ala-tRNA_ligase"/>
</dbReference>
<dbReference type="InterPro" id="IPR023033">
    <property type="entry name" value="Ala_tRNA_ligase_euk/bac"/>
</dbReference>
<dbReference type="InterPro" id="IPR003156">
    <property type="entry name" value="DHHA1_dom"/>
</dbReference>
<dbReference type="InterPro" id="IPR018163">
    <property type="entry name" value="Thr/Ala-tRNA-synth_IIc_edit"/>
</dbReference>
<dbReference type="InterPro" id="IPR009000">
    <property type="entry name" value="Transl_B-barrel_sf"/>
</dbReference>
<dbReference type="InterPro" id="IPR012947">
    <property type="entry name" value="tRNA_SAD"/>
</dbReference>
<dbReference type="NCBIfam" id="TIGR00344">
    <property type="entry name" value="alaS"/>
    <property type="match status" value="1"/>
</dbReference>
<dbReference type="PANTHER" id="PTHR11777:SF9">
    <property type="entry name" value="ALANINE--TRNA LIGASE, CYTOPLASMIC"/>
    <property type="match status" value="1"/>
</dbReference>
<dbReference type="PANTHER" id="PTHR11777">
    <property type="entry name" value="ALANYL-TRNA SYNTHETASE"/>
    <property type="match status" value="1"/>
</dbReference>
<dbReference type="Pfam" id="PF02272">
    <property type="entry name" value="DHHA1"/>
    <property type="match status" value="1"/>
</dbReference>
<dbReference type="Pfam" id="PF01411">
    <property type="entry name" value="tRNA-synt_2c"/>
    <property type="match status" value="1"/>
</dbReference>
<dbReference type="Pfam" id="PF07973">
    <property type="entry name" value="tRNA_SAD"/>
    <property type="match status" value="1"/>
</dbReference>
<dbReference type="PRINTS" id="PR00980">
    <property type="entry name" value="TRNASYNTHALA"/>
</dbReference>
<dbReference type="SMART" id="SM00863">
    <property type="entry name" value="tRNA_SAD"/>
    <property type="match status" value="1"/>
</dbReference>
<dbReference type="SUPFAM" id="SSF55681">
    <property type="entry name" value="Class II aaRS and biotin synthetases"/>
    <property type="match status" value="1"/>
</dbReference>
<dbReference type="SUPFAM" id="SSF101353">
    <property type="entry name" value="Putative anticodon-binding domain of alanyl-tRNA synthetase (AlaRS)"/>
    <property type="match status" value="1"/>
</dbReference>
<dbReference type="SUPFAM" id="SSF55186">
    <property type="entry name" value="ThrRS/AlaRS common domain"/>
    <property type="match status" value="1"/>
</dbReference>
<dbReference type="SUPFAM" id="SSF50447">
    <property type="entry name" value="Translation proteins"/>
    <property type="match status" value="1"/>
</dbReference>
<dbReference type="PROSITE" id="PS50860">
    <property type="entry name" value="AA_TRNA_LIGASE_II_ALA"/>
    <property type="match status" value="1"/>
</dbReference>
<name>SYA_STAA8</name>
<evidence type="ECO:0000255" key="1">
    <source>
        <dbReference type="HAMAP-Rule" id="MF_00036"/>
    </source>
</evidence>
<comment type="function">
    <text evidence="1">Catalyzes the attachment of alanine to tRNA(Ala) in a two-step reaction: alanine is first activated by ATP to form Ala-AMP and then transferred to the acceptor end of tRNA(Ala). Also edits incorrectly charged Ser-tRNA(Ala) and Gly-tRNA(Ala) via its editing domain.</text>
</comment>
<comment type="catalytic activity">
    <reaction evidence="1">
        <text>tRNA(Ala) + L-alanine + ATP = L-alanyl-tRNA(Ala) + AMP + diphosphate</text>
        <dbReference type="Rhea" id="RHEA:12540"/>
        <dbReference type="Rhea" id="RHEA-COMP:9657"/>
        <dbReference type="Rhea" id="RHEA-COMP:9923"/>
        <dbReference type="ChEBI" id="CHEBI:30616"/>
        <dbReference type="ChEBI" id="CHEBI:33019"/>
        <dbReference type="ChEBI" id="CHEBI:57972"/>
        <dbReference type="ChEBI" id="CHEBI:78442"/>
        <dbReference type="ChEBI" id="CHEBI:78497"/>
        <dbReference type="ChEBI" id="CHEBI:456215"/>
        <dbReference type="EC" id="6.1.1.7"/>
    </reaction>
</comment>
<comment type="cofactor">
    <cofactor evidence="1">
        <name>Zn(2+)</name>
        <dbReference type="ChEBI" id="CHEBI:29105"/>
    </cofactor>
    <text evidence="1">Binds 1 zinc ion per subunit.</text>
</comment>
<comment type="subcellular location">
    <subcellularLocation>
        <location evidence="1">Cytoplasm</location>
    </subcellularLocation>
</comment>
<comment type="domain">
    <text evidence="1">Consists of three domains; the N-terminal catalytic domain, the editing domain and the C-terminal C-Ala domain. The editing domain removes incorrectly charged amino acids, while the C-Ala domain, along with tRNA(Ala), serves as a bridge to cooperatively bring together the editing and aminoacylation centers thus stimulating deacylation of misacylated tRNAs.</text>
</comment>
<comment type="similarity">
    <text evidence="1">Belongs to the class-II aminoacyl-tRNA synthetase family.</text>
</comment>
<organism>
    <name type="scientific">Staphylococcus aureus (strain NCTC 8325 / PS 47)</name>
    <dbReference type="NCBI Taxonomy" id="93061"/>
    <lineage>
        <taxon>Bacteria</taxon>
        <taxon>Bacillati</taxon>
        <taxon>Bacillota</taxon>
        <taxon>Bacilli</taxon>
        <taxon>Bacillales</taxon>
        <taxon>Staphylococcaceae</taxon>
        <taxon>Staphylococcus</taxon>
    </lineage>
</organism>
<protein>
    <recommendedName>
        <fullName evidence="1">Alanine--tRNA ligase</fullName>
        <ecNumber evidence="1">6.1.1.7</ecNumber>
    </recommendedName>
    <alternativeName>
        <fullName evidence="1">Alanyl-tRNA synthetase</fullName>
        <shortName evidence="1">AlaRS</shortName>
    </alternativeName>
</protein>
<feature type="chain" id="PRO_0000347812" description="Alanine--tRNA ligase">
    <location>
        <begin position="1"/>
        <end position="876"/>
    </location>
</feature>
<feature type="binding site" evidence="1">
    <location>
        <position position="565"/>
    </location>
    <ligand>
        <name>Zn(2+)</name>
        <dbReference type="ChEBI" id="CHEBI:29105"/>
    </ligand>
</feature>
<feature type="binding site" evidence="1">
    <location>
        <position position="569"/>
    </location>
    <ligand>
        <name>Zn(2+)</name>
        <dbReference type="ChEBI" id="CHEBI:29105"/>
    </ligand>
</feature>
<feature type="binding site" evidence="1">
    <location>
        <position position="667"/>
    </location>
    <ligand>
        <name>Zn(2+)</name>
        <dbReference type="ChEBI" id="CHEBI:29105"/>
    </ligand>
</feature>
<feature type="binding site" evidence="1">
    <location>
        <position position="671"/>
    </location>
    <ligand>
        <name>Zn(2+)</name>
        <dbReference type="ChEBI" id="CHEBI:29105"/>
    </ligand>
</feature>
<proteinExistence type="inferred from homology"/>
<accession>Q2FXV9</accession>
<sequence length="876" mass="98520">MKKLKASEIRQKYLDFFVEKGHMVEPSAPLVPIDDDTLLWINSGVATLKKYFDGRETPKKPRIVNSQKAIRTNDIENVGFTARHHTFFEMLGNFSIGDYFKQEAIEFAWEFLTSDKWMGMEPDKLYVTIHPEDMEAYNIWHKDIGLEESRIIRIEGNFWDIGEGPSGPNTEIFYDRGEAYGQDDPAEEMYPGGENERYLEVWNLVFSEFNHNKDHSYTPLPNKNIDTGMGLERMASVSQNVRTNYETDLFMPIMNEIEKVSGKQYLVNNEQDVAFKVIADHIRTIAFAISDGALPANEGRGYVLRRLLRRAVRFSQTLGINEPFMYKLVDIVADIMEPYYPNVKEKADFIKRVIKSEEERFHETLEDGLAILNELIKKAKATTNEINGKDAFKLYDTYGFPIELTEEIAVQAGLKVDMTTFESEMQQQRDRARQARQNSQSMQVQSEVLKNITSASTFVGYDTATAQTTLTHLIYNGEEVSQVEAGETVYFMLTETPFYAISGGQVADTGIVYNDNFEIAVSEVTKAPNGQNLHKGVVQFGQVNVGATVSAEVNQNDRRDIQKNHSATHLLHAALKSVLGDHVNQAGSLVEADRLRFDFSHFGPMTNDEIDQVERLVNEEIWKGIDVNIQEMDIASAKEMGAMALFGEKYGDVVRVVNMAPFSIELCGGIHVRNTSEIGLFKIVSESGTGAGVRRIEALTGKAAFLYLEDIQEKFNTMKSQLKVKSDDQVVDKLTQLQDEEKALLKQLEQRDKEITSLKMGNIEDQVEEINGYKVLVTEVDVPNAKAIRSTMDDFKSKLQDTIIILASNVDDKVSMVATVPKSLTNNVKAGDLIKQMAPIVGGKGGGRPDMAQGGGTQPENISKSLSFIKDYIKNL</sequence>
<keyword id="KW-0030">Aminoacyl-tRNA synthetase</keyword>
<keyword id="KW-0067">ATP-binding</keyword>
<keyword id="KW-0963">Cytoplasm</keyword>
<keyword id="KW-0436">Ligase</keyword>
<keyword id="KW-0479">Metal-binding</keyword>
<keyword id="KW-0547">Nucleotide-binding</keyword>
<keyword id="KW-0648">Protein biosynthesis</keyword>
<keyword id="KW-1185">Reference proteome</keyword>
<keyword id="KW-0694">RNA-binding</keyword>
<keyword id="KW-0820">tRNA-binding</keyword>
<keyword id="KW-0862">Zinc</keyword>